<proteinExistence type="inferred from homology"/>
<reference key="1">
    <citation type="journal article" date="2015" name="Proc. Natl. Acad. Sci. U.S.A.">
        <title>Trichodesmium genome maintains abundant, widespread noncoding DNA in situ, despite oligotrophic lifestyle.</title>
        <authorList>
            <person name="Walworth N."/>
            <person name="Pfreundt U."/>
            <person name="Nelson W.C."/>
            <person name="Mincer T."/>
            <person name="Heidelberg J.F."/>
            <person name="Fu F."/>
            <person name="Waterbury J.B."/>
            <person name="Glavina del Rio T."/>
            <person name="Goodwin L."/>
            <person name="Kyrpides N.C."/>
            <person name="Land M.L."/>
            <person name="Woyke T."/>
            <person name="Hutchins D.A."/>
            <person name="Hess W.R."/>
            <person name="Webb E.A."/>
        </authorList>
    </citation>
    <scope>NUCLEOTIDE SEQUENCE [LARGE SCALE GENOMIC DNA]</scope>
    <source>
        <strain>IMS101</strain>
    </source>
</reference>
<keyword id="KW-0687">Ribonucleoprotein</keyword>
<keyword id="KW-0689">Ribosomal protein</keyword>
<keyword id="KW-0694">RNA-binding</keyword>
<keyword id="KW-0699">rRNA-binding</keyword>
<dbReference type="EMBL" id="CP000393">
    <property type="protein sequence ID" value="ABG49746.1"/>
    <property type="molecule type" value="Genomic_DNA"/>
</dbReference>
<dbReference type="RefSeq" id="WP_011610142.1">
    <property type="nucleotide sequence ID" value="NC_008312.1"/>
</dbReference>
<dbReference type="SMR" id="Q119S8"/>
<dbReference type="STRING" id="203124.Tery_0263"/>
<dbReference type="KEGG" id="ter:Tery_0263"/>
<dbReference type="eggNOG" id="COG0244">
    <property type="taxonomic scope" value="Bacteria"/>
</dbReference>
<dbReference type="HOGENOM" id="CLU_092227_1_1_3"/>
<dbReference type="OrthoDB" id="9808307at2"/>
<dbReference type="GO" id="GO:0015934">
    <property type="term" value="C:large ribosomal subunit"/>
    <property type="evidence" value="ECO:0007669"/>
    <property type="project" value="InterPro"/>
</dbReference>
<dbReference type="GO" id="GO:0070180">
    <property type="term" value="F:large ribosomal subunit rRNA binding"/>
    <property type="evidence" value="ECO:0007669"/>
    <property type="project" value="UniProtKB-UniRule"/>
</dbReference>
<dbReference type="GO" id="GO:0003735">
    <property type="term" value="F:structural constituent of ribosome"/>
    <property type="evidence" value="ECO:0007669"/>
    <property type="project" value="InterPro"/>
</dbReference>
<dbReference type="GO" id="GO:0006412">
    <property type="term" value="P:translation"/>
    <property type="evidence" value="ECO:0007669"/>
    <property type="project" value="UniProtKB-UniRule"/>
</dbReference>
<dbReference type="CDD" id="cd05797">
    <property type="entry name" value="Ribosomal_L10"/>
    <property type="match status" value="1"/>
</dbReference>
<dbReference type="Gene3D" id="3.30.70.1730">
    <property type="match status" value="1"/>
</dbReference>
<dbReference type="Gene3D" id="6.10.250.290">
    <property type="match status" value="1"/>
</dbReference>
<dbReference type="HAMAP" id="MF_00362">
    <property type="entry name" value="Ribosomal_uL10"/>
    <property type="match status" value="1"/>
</dbReference>
<dbReference type="InterPro" id="IPR001790">
    <property type="entry name" value="Ribosomal_uL10"/>
</dbReference>
<dbReference type="InterPro" id="IPR043141">
    <property type="entry name" value="Ribosomal_uL10-like_sf"/>
</dbReference>
<dbReference type="InterPro" id="IPR022973">
    <property type="entry name" value="Ribosomal_uL10_bac"/>
</dbReference>
<dbReference type="InterPro" id="IPR047865">
    <property type="entry name" value="Ribosomal_uL10_bac_type"/>
</dbReference>
<dbReference type="InterPro" id="IPR002363">
    <property type="entry name" value="Ribosomal_uL10_CS_bac"/>
</dbReference>
<dbReference type="NCBIfam" id="NF000955">
    <property type="entry name" value="PRK00099.1-1"/>
    <property type="match status" value="1"/>
</dbReference>
<dbReference type="PANTHER" id="PTHR11560">
    <property type="entry name" value="39S RIBOSOMAL PROTEIN L10, MITOCHONDRIAL"/>
    <property type="match status" value="1"/>
</dbReference>
<dbReference type="Pfam" id="PF00466">
    <property type="entry name" value="Ribosomal_L10"/>
    <property type="match status" value="1"/>
</dbReference>
<dbReference type="SUPFAM" id="SSF160369">
    <property type="entry name" value="Ribosomal protein L10-like"/>
    <property type="match status" value="1"/>
</dbReference>
<dbReference type="PROSITE" id="PS01109">
    <property type="entry name" value="RIBOSOMAL_L10"/>
    <property type="match status" value="1"/>
</dbReference>
<sequence>MGKSKKQKEEMLAGIKQNLSESQLALVINYQGLSVAEITDLRRRLIPTGSICSIAKNTLMGIAVKEDSNWQPMEDLLAGSNAFLFLKNDIGGAIKAYQDFQKATKKTEFKGGVMEGRLLDKDQVKAIADLPSKEELLAQVAGAINNIATKLAISLDAVPTQLATGINEVPASVNRAIKAISDKEQQGDAA</sequence>
<evidence type="ECO:0000255" key="1">
    <source>
        <dbReference type="HAMAP-Rule" id="MF_00362"/>
    </source>
</evidence>
<evidence type="ECO:0000305" key="2"/>
<gene>
    <name evidence="1" type="primary">rplJ</name>
    <name evidence="1" type="synonym">rpl10</name>
    <name type="ordered locus">Tery_0263</name>
</gene>
<protein>
    <recommendedName>
        <fullName evidence="1">Large ribosomal subunit protein uL10</fullName>
    </recommendedName>
    <alternativeName>
        <fullName evidence="2">50S ribosomal protein L10</fullName>
    </alternativeName>
</protein>
<accession>Q119S8</accession>
<comment type="function">
    <text evidence="1">Forms part of the ribosomal stalk, playing a central role in the interaction of the ribosome with GTP-bound translation factors.</text>
</comment>
<comment type="subunit">
    <text evidence="1">Part of the ribosomal stalk of the 50S ribosomal subunit. The N-terminus interacts with L11 and the large rRNA to form the base of the stalk. The C-terminus forms an elongated spine to which L12 dimers bind in a sequential fashion forming a multimeric L10(L12)X complex.</text>
</comment>
<comment type="similarity">
    <text evidence="1">Belongs to the universal ribosomal protein uL10 family.</text>
</comment>
<organism>
    <name type="scientific">Trichodesmium erythraeum (strain IMS101)</name>
    <dbReference type="NCBI Taxonomy" id="203124"/>
    <lineage>
        <taxon>Bacteria</taxon>
        <taxon>Bacillati</taxon>
        <taxon>Cyanobacteriota</taxon>
        <taxon>Cyanophyceae</taxon>
        <taxon>Oscillatoriophycideae</taxon>
        <taxon>Oscillatoriales</taxon>
        <taxon>Microcoleaceae</taxon>
        <taxon>Trichodesmium</taxon>
    </lineage>
</organism>
<name>RL10_TRIEI</name>
<feature type="chain" id="PRO_1000005615" description="Large ribosomal subunit protein uL10">
    <location>
        <begin position="1"/>
        <end position="190"/>
    </location>
</feature>